<keyword id="KW-0067">ATP-binding</keyword>
<keyword id="KW-0173">Coenzyme A biosynthesis</keyword>
<keyword id="KW-0963">Cytoplasm</keyword>
<keyword id="KW-0418">Kinase</keyword>
<keyword id="KW-0479">Metal-binding</keyword>
<keyword id="KW-0547">Nucleotide-binding</keyword>
<keyword id="KW-0630">Potassium</keyword>
<keyword id="KW-0808">Transferase</keyword>
<evidence type="ECO:0000255" key="1">
    <source>
        <dbReference type="HAMAP-Rule" id="MF_01274"/>
    </source>
</evidence>
<name>COAX_SYNJA</name>
<gene>
    <name evidence="1" type="primary">coaX</name>
    <name type="ordered locus">CYA_0337</name>
</gene>
<comment type="function">
    <text evidence="1">Catalyzes the phosphorylation of pantothenate (Pan), the first step in CoA biosynthesis.</text>
</comment>
<comment type="catalytic activity">
    <reaction evidence="1">
        <text>(R)-pantothenate + ATP = (R)-4'-phosphopantothenate + ADP + H(+)</text>
        <dbReference type="Rhea" id="RHEA:16373"/>
        <dbReference type="ChEBI" id="CHEBI:10986"/>
        <dbReference type="ChEBI" id="CHEBI:15378"/>
        <dbReference type="ChEBI" id="CHEBI:29032"/>
        <dbReference type="ChEBI" id="CHEBI:30616"/>
        <dbReference type="ChEBI" id="CHEBI:456216"/>
        <dbReference type="EC" id="2.7.1.33"/>
    </reaction>
</comment>
<comment type="cofactor">
    <cofactor evidence="1">
        <name>NH4(+)</name>
        <dbReference type="ChEBI" id="CHEBI:28938"/>
    </cofactor>
    <cofactor evidence="1">
        <name>K(+)</name>
        <dbReference type="ChEBI" id="CHEBI:29103"/>
    </cofactor>
    <text evidence="1">A monovalent cation. Ammonium or potassium.</text>
</comment>
<comment type="pathway">
    <text evidence="1">Cofactor biosynthesis; coenzyme A biosynthesis; CoA from (R)-pantothenate: step 1/5.</text>
</comment>
<comment type="subunit">
    <text evidence="1">Homodimer.</text>
</comment>
<comment type="subcellular location">
    <subcellularLocation>
        <location evidence="1">Cytoplasm</location>
    </subcellularLocation>
</comment>
<comment type="similarity">
    <text evidence="1">Belongs to the type III pantothenate kinase family.</text>
</comment>
<accession>Q2JXC9</accession>
<organism>
    <name type="scientific">Synechococcus sp. (strain JA-3-3Ab)</name>
    <name type="common">Cyanobacteria bacterium Yellowstone A-Prime</name>
    <dbReference type="NCBI Taxonomy" id="321327"/>
    <lineage>
        <taxon>Bacteria</taxon>
        <taxon>Bacillati</taxon>
        <taxon>Cyanobacteriota</taxon>
        <taxon>Cyanophyceae</taxon>
        <taxon>Synechococcales</taxon>
        <taxon>Synechococcaceae</taxon>
        <taxon>Synechococcus</taxon>
    </lineage>
</organism>
<sequence length="244" mass="26573">MSSEAERWLAAVVGNTHVRWGWFAGESLVKVEQFPAHQPLSWPEETELWLAAVGSAPLPPRSPWVHCLELSQVPLRDPYPSLGLDRALALWAAGIRYGWPCLVIDAGTALTLTGADAEGSLVGGAILPGLGLQAQALADHTARLPKVEWDPGAPIPPRWARNTGAAIRSGILHTLLAGLRDFLADWRRRFPQGPLLVTGGDGELLYPHLRPLDAELRWDPHLVLRGIAGCRQLHRVVRKPSGAE</sequence>
<feature type="chain" id="PRO_0000270903" description="Type III pantothenate kinase">
    <location>
        <begin position="1"/>
        <end position="244"/>
    </location>
</feature>
<feature type="active site" description="Proton acceptor" evidence="1">
    <location>
        <position position="85"/>
    </location>
</feature>
<feature type="binding site" evidence="1">
    <location>
        <begin position="12"/>
        <end position="19"/>
    </location>
    <ligand>
        <name>ATP</name>
        <dbReference type="ChEBI" id="CHEBI:30616"/>
    </ligand>
</feature>
<feature type="binding site" evidence="1">
    <location>
        <position position="79"/>
    </location>
    <ligand>
        <name>substrate</name>
    </ligand>
</feature>
<feature type="binding site" evidence="1">
    <location>
        <begin position="83"/>
        <end position="86"/>
    </location>
    <ligand>
        <name>substrate</name>
    </ligand>
</feature>
<feature type="binding site" evidence="1">
    <location>
        <position position="105"/>
    </location>
    <ligand>
        <name>K(+)</name>
        <dbReference type="ChEBI" id="CHEBI:29103"/>
    </ligand>
</feature>
<feature type="binding site" evidence="1">
    <location>
        <position position="108"/>
    </location>
    <ligand>
        <name>ATP</name>
        <dbReference type="ChEBI" id="CHEBI:30616"/>
    </ligand>
</feature>
<feature type="binding site" evidence="1">
    <location>
        <position position="163"/>
    </location>
    <ligand>
        <name>substrate</name>
    </ligand>
</feature>
<proteinExistence type="inferred from homology"/>
<dbReference type="EC" id="2.7.1.33" evidence="1"/>
<dbReference type="EMBL" id="CP000239">
    <property type="protein sequence ID" value="ABC98557.1"/>
    <property type="molecule type" value="Genomic_DNA"/>
</dbReference>
<dbReference type="RefSeq" id="WP_011429246.1">
    <property type="nucleotide sequence ID" value="NC_007775.1"/>
</dbReference>
<dbReference type="SMR" id="Q2JXC9"/>
<dbReference type="STRING" id="321327.CYA_0337"/>
<dbReference type="KEGG" id="cya:CYA_0337"/>
<dbReference type="eggNOG" id="COG1521">
    <property type="taxonomic scope" value="Bacteria"/>
</dbReference>
<dbReference type="HOGENOM" id="CLU_066627_2_1_3"/>
<dbReference type="OrthoDB" id="482945at2"/>
<dbReference type="UniPathway" id="UPA00241">
    <property type="reaction ID" value="UER00352"/>
</dbReference>
<dbReference type="Proteomes" id="UP000008818">
    <property type="component" value="Chromosome"/>
</dbReference>
<dbReference type="GO" id="GO:0005737">
    <property type="term" value="C:cytoplasm"/>
    <property type="evidence" value="ECO:0007669"/>
    <property type="project" value="UniProtKB-SubCell"/>
</dbReference>
<dbReference type="GO" id="GO:0005524">
    <property type="term" value="F:ATP binding"/>
    <property type="evidence" value="ECO:0007669"/>
    <property type="project" value="UniProtKB-UniRule"/>
</dbReference>
<dbReference type="GO" id="GO:0046872">
    <property type="term" value="F:metal ion binding"/>
    <property type="evidence" value="ECO:0007669"/>
    <property type="project" value="UniProtKB-KW"/>
</dbReference>
<dbReference type="GO" id="GO:0004594">
    <property type="term" value="F:pantothenate kinase activity"/>
    <property type="evidence" value="ECO:0007669"/>
    <property type="project" value="UniProtKB-UniRule"/>
</dbReference>
<dbReference type="GO" id="GO:0015937">
    <property type="term" value="P:coenzyme A biosynthetic process"/>
    <property type="evidence" value="ECO:0007669"/>
    <property type="project" value="UniProtKB-UniRule"/>
</dbReference>
<dbReference type="CDD" id="cd24015">
    <property type="entry name" value="ASKHA_NBD_PanK-III"/>
    <property type="match status" value="1"/>
</dbReference>
<dbReference type="Gene3D" id="3.30.420.40">
    <property type="match status" value="1"/>
</dbReference>
<dbReference type="HAMAP" id="MF_01274">
    <property type="entry name" value="Pantothen_kinase_3"/>
    <property type="match status" value="1"/>
</dbReference>
<dbReference type="InterPro" id="IPR043129">
    <property type="entry name" value="ATPase_NBD"/>
</dbReference>
<dbReference type="InterPro" id="IPR004619">
    <property type="entry name" value="Type_III_PanK"/>
</dbReference>
<dbReference type="NCBIfam" id="TIGR00671">
    <property type="entry name" value="baf"/>
    <property type="match status" value="1"/>
</dbReference>
<dbReference type="NCBIfam" id="NF009871">
    <property type="entry name" value="PRK13331.1"/>
    <property type="match status" value="1"/>
</dbReference>
<dbReference type="PANTHER" id="PTHR34265">
    <property type="entry name" value="TYPE III PANTOTHENATE KINASE"/>
    <property type="match status" value="1"/>
</dbReference>
<dbReference type="PANTHER" id="PTHR34265:SF1">
    <property type="entry name" value="TYPE III PANTOTHENATE KINASE"/>
    <property type="match status" value="1"/>
</dbReference>
<dbReference type="Pfam" id="PF03309">
    <property type="entry name" value="Pan_kinase"/>
    <property type="match status" value="1"/>
</dbReference>
<dbReference type="SUPFAM" id="SSF53067">
    <property type="entry name" value="Actin-like ATPase domain"/>
    <property type="match status" value="1"/>
</dbReference>
<protein>
    <recommendedName>
        <fullName evidence="1">Type III pantothenate kinase</fullName>
        <ecNumber evidence="1">2.7.1.33</ecNumber>
    </recommendedName>
    <alternativeName>
        <fullName evidence="1">PanK-III</fullName>
    </alternativeName>
    <alternativeName>
        <fullName evidence="1">Pantothenic acid kinase</fullName>
    </alternativeName>
</protein>
<reference key="1">
    <citation type="journal article" date="2007" name="ISME J.">
        <title>Population level functional diversity in a microbial community revealed by comparative genomic and metagenomic analyses.</title>
        <authorList>
            <person name="Bhaya D."/>
            <person name="Grossman A.R."/>
            <person name="Steunou A.-S."/>
            <person name="Khuri N."/>
            <person name="Cohan F.M."/>
            <person name="Hamamura N."/>
            <person name="Melendrez M.C."/>
            <person name="Bateson M.M."/>
            <person name="Ward D.M."/>
            <person name="Heidelberg J.F."/>
        </authorList>
    </citation>
    <scope>NUCLEOTIDE SEQUENCE [LARGE SCALE GENOMIC DNA]</scope>
    <source>
        <strain>JA-3-3Ab</strain>
    </source>
</reference>